<accession>Q8RCP4</accession>
<organism>
    <name type="scientific">Caldanaerobacter subterraneus subsp. tengcongensis (strain DSM 15242 / JCM 11007 / NBRC 100824 / MB4)</name>
    <name type="common">Thermoanaerobacter tengcongensis</name>
    <dbReference type="NCBI Taxonomy" id="273068"/>
    <lineage>
        <taxon>Bacteria</taxon>
        <taxon>Bacillati</taxon>
        <taxon>Bacillota</taxon>
        <taxon>Clostridia</taxon>
        <taxon>Thermoanaerobacterales</taxon>
        <taxon>Thermoanaerobacteraceae</taxon>
        <taxon>Caldanaerobacter</taxon>
    </lineage>
</organism>
<keyword id="KW-0067">ATP-binding</keyword>
<keyword id="KW-0169">Cobalamin biosynthesis</keyword>
<keyword id="KW-0315">Glutamine amidotransferase</keyword>
<keyword id="KW-0436">Ligase</keyword>
<keyword id="KW-0460">Magnesium</keyword>
<keyword id="KW-0547">Nucleotide-binding</keyword>
<keyword id="KW-1185">Reference proteome</keyword>
<dbReference type="EC" id="6.3.5.11" evidence="1"/>
<dbReference type="EMBL" id="AE008691">
    <property type="protein sequence ID" value="AAM23662.1"/>
    <property type="molecule type" value="Genomic_DNA"/>
</dbReference>
<dbReference type="RefSeq" id="WP_011024819.1">
    <property type="nucleotide sequence ID" value="NC_003869.1"/>
</dbReference>
<dbReference type="SMR" id="Q8RCP4"/>
<dbReference type="STRING" id="273068.TTE0375"/>
<dbReference type="KEGG" id="tte:TTE0375"/>
<dbReference type="eggNOG" id="COG1797">
    <property type="taxonomic scope" value="Bacteria"/>
</dbReference>
<dbReference type="HOGENOM" id="CLU_022752_2_0_9"/>
<dbReference type="OrthoDB" id="9764035at2"/>
<dbReference type="UniPathway" id="UPA00148">
    <property type="reaction ID" value="UER00231"/>
</dbReference>
<dbReference type="Proteomes" id="UP000000555">
    <property type="component" value="Chromosome"/>
</dbReference>
<dbReference type="GO" id="GO:0005524">
    <property type="term" value="F:ATP binding"/>
    <property type="evidence" value="ECO:0007669"/>
    <property type="project" value="UniProtKB-UniRule"/>
</dbReference>
<dbReference type="GO" id="GO:0042242">
    <property type="term" value="F:cobyrinic acid a,c-diamide synthase activity"/>
    <property type="evidence" value="ECO:0007669"/>
    <property type="project" value="UniProtKB-UniRule"/>
</dbReference>
<dbReference type="GO" id="GO:0009236">
    <property type="term" value="P:cobalamin biosynthetic process"/>
    <property type="evidence" value="ECO:0007669"/>
    <property type="project" value="UniProtKB-UniRule"/>
</dbReference>
<dbReference type="CDD" id="cd05388">
    <property type="entry name" value="CobB_N"/>
    <property type="match status" value="1"/>
</dbReference>
<dbReference type="CDD" id="cd03130">
    <property type="entry name" value="GATase1_CobB"/>
    <property type="match status" value="1"/>
</dbReference>
<dbReference type="Gene3D" id="3.40.50.880">
    <property type="match status" value="1"/>
</dbReference>
<dbReference type="Gene3D" id="3.40.50.300">
    <property type="entry name" value="P-loop containing nucleotide triphosphate hydrolases"/>
    <property type="match status" value="1"/>
</dbReference>
<dbReference type="HAMAP" id="MF_00027">
    <property type="entry name" value="CobB_CbiA"/>
    <property type="match status" value="1"/>
</dbReference>
<dbReference type="InterPro" id="IPR004484">
    <property type="entry name" value="CbiA/CobB_synth"/>
</dbReference>
<dbReference type="InterPro" id="IPR029062">
    <property type="entry name" value="Class_I_gatase-like"/>
</dbReference>
<dbReference type="InterPro" id="IPR002586">
    <property type="entry name" value="CobQ/CobB/MinD/ParA_Nub-bd_dom"/>
</dbReference>
<dbReference type="InterPro" id="IPR011698">
    <property type="entry name" value="GATase_3"/>
</dbReference>
<dbReference type="InterPro" id="IPR027417">
    <property type="entry name" value="P-loop_NTPase"/>
</dbReference>
<dbReference type="NCBIfam" id="TIGR00379">
    <property type="entry name" value="cobB"/>
    <property type="match status" value="1"/>
</dbReference>
<dbReference type="NCBIfam" id="NF002204">
    <property type="entry name" value="PRK01077.1"/>
    <property type="match status" value="1"/>
</dbReference>
<dbReference type="PANTHER" id="PTHR43873">
    <property type="entry name" value="COBYRINATE A,C-DIAMIDE SYNTHASE"/>
    <property type="match status" value="1"/>
</dbReference>
<dbReference type="PANTHER" id="PTHR43873:SF1">
    <property type="entry name" value="COBYRINATE A,C-DIAMIDE SYNTHASE"/>
    <property type="match status" value="1"/>
</dbReference>
<dbReference type="Pfam" id="PF01656">
    <property type="entry name" value="CbiA"/>
    <property type="match status" value="1"/>
</dbReference>
<dbReference type="Pfam" id="PF07685">
    <property type="entry name" value="GATase_3"/>
    <property type="match status" value="1"/>
</dbReference>
<dbReference type="SUPFAM" id="SSF52317">
    <property type="entry name" value="Class I glutamine amidotransferase-like"/>
    <property type="match status" value="1"/>
</dbReference>
<dbReference type="SUPFAM" id="SSF52540">
    <property type="entry name" value="P-loop containing nucleoside triphosphate hydrolases"/>
    <property type="match status" value="1"/>
</dbReference>
<dbReference type="PROSITE" id="PS51274">
    <property type="entry name" value="GATASE_COBBQ"/>
    <property type="match status" value="1"/>
</dbReference>
<name>CBIA_CALS4</name>
<feature type="chain" id="PRO_0000141272" description="Cobyrinate a,c-diamide synthase">
    <location>
        <begin position="1"/>
        <end position="452"/>
    </location>
</feature>
<feature type="domain" description="GATase cobBQ-type" evidence="1">
    <location>
        <begin position="244"/>
        <end position="437"/>
    </location>
</feature>
<feature type="active site" description="Nucleophile" evidence="1">
    <location>
        <position position="327"/>
    </location>
</feature>
<feature type="site" description="Increases nucleophilicity of active site Cys" evidence="1">
    <location>
        <position position="429"/>
    </location>
</feature>
<reference key="1">
    <citation type="journal article" date="2002" name="Genome Res.">
        <title>A complete sequence of the T. tengcongensis genome.</title>
        <authorList>
            <person name="Bao Q."/>
            <person name="Tian Y."/>
            <person name="Li W."/>
            <person name="Xu Z."/>
            <person name="Xuan Z."/>
            <person name="Hu S."/>
            <person name="Dong W."/>
            <person name="Yang J."/>
            <person name="Chen Y."/>
            <person name="Xue Y."/>
            <person name="Xu Y."/>
            <person name="Lai X."/>
            <person name="Huang L."/>
            <person name="Dong X."/>
            <person name="Ma Y."/>
            <person name="Ling L."/>
            <person name="Tan H."/>
            <person name="Chen R."/>
            <person name="Wang J."/>
            <person name="Yu J."/>
            <person name="Yang H."/>
        </authorList>
    </citation>
    <scope>NUCLEOTIDE SEQUENCE [LARGE SCALE GENOMIC DNA]</scope>
    <source>
        <strain>DSM 15242 / JCM 11007 / NBRC 100824 / MB4</strain>
    </source>
</reference>
<comment type="function">
    <text evidence="1">Catalyzes the ATP-dependent amidation of the two carboxylate groups at positions a and c of cobyrinate, using either L-glutamine or ammonia as the nitrogen source.</text>
</comment>
<comment type="catalytic activity">
    <reaction evidence="1">
        <text>cob(II)yrinate + 2 L-glutamine + 2 ATP + 2 H2O = cob(II)yrinate a,c diamide + 2 L-glutamate + 2 ADP + 2 phosphate + 2 H(+)</text>
        <dbReference type="Rhea" id="RHEA:26289"/>
        <dbReference type="ChEBI" id="CHEBI:15377"/>
        <dbReference type="ChEBI" id="CHEBI:15378"/>
        <dbReference type="ChEBI" id="CHEBI:29985"/>
        <dbReference type="ChEBI" id="CHEBI:30616"/>
        <dbReference type="ChEBI" id="CHEBI:43474"/>
        <dbReference type="ChEBI" id="CHEBI:58359"/>
        <dbReference type="ChEBI" id="CHEBI:58537"/>
        <dbReference type="ChEBI" id="CHEBI:58894"/>
        <dbReference type="ChEBI" id="CHEBI:456216"/>
        <dbReference type="EC" id="6.3.5.11"/>
    </reaction>
</comment>
<comment type="cofactor">
    <cofactor evidence="1">
        <name>Mg(2+)</name>
        <dbReference type="ChEBI" id="CHEBI:18420"/>
    </cofactor>
</comment>
<comment type="pathway">
    <text evidence="1">Cofactor biosynthesis; adenosylcobalamin biosynthesis; cob(II)yrinate a,c-diamide from sirohydrochlorin (anaerobic route): step 10/10.</text>
</comment>
<comment type="domain">
    <text evidence="1">Comprises of two domains. The C-terminal domain contains the binding site for glutamine and catalyzes the hydrolysis of this substrate to glutamate and ammonia. The N-terminal domain is anticipated to bind ATP and cobyrinate and catalyzes the ultimate synthesis of the diamide product. The ammonia produced via the glutaminase domain is probably translocated to the adjacent domain via a molecular tunnel, where it reacts with an activated intermediate.</text>
</comment>
<comment type="miscellaneous">
    <text evidence="1">The a and c carboxylates of cobyrinate are activated for nucleophilic attack via formation of a phosphorylated intermediate by ATP. CbiA catalyzes first the amidation of the c-carboxylate, and then that of the a-carboxylate.</text>
</comment>
<comment type="similarity">
    <text evidence="1">Belongs to the CobB/CbiA family.</text>
</comment>
<evidence type="ECO:0000255" key="1">
    <source>
        <dbReference type="HAMAP-Rule" id="MF_00027"/>
    </source>
</evidence>
<protein>
    <recommendedName>
        <fullName evidence="1">Cobyrinate a,c-diamide synthase</fullName>
        <ecNumber evidence="1">6.3.5.11</ecNumber>
    </recommendedName>
    <alternativeName>
        <fullName evidence="1">Cobyrinic acid a,c-diamide synthetase</fullName>
    </alternativeName>
</protein>
<gene>
    <name evidence="1" type="primary">cbiA</name>
    <name type="synonym">cobB</name>
    <name type="ordered locus">TTE0375</name>
</gene>
<sequence>MCRVFMIAGTHSGAGKTTLSLGIMGVLSKKYNVRPFKVGPDYIDTAYHRYVTRNFSVNLDLFMLGEENLKNLFYKNASRADVSIIEGVMGLYDGIDTTSRGSSAHIAKLVNVPVVLVVDASSMAASVSALIMGYIYYDKDVDIRGVILNKVGSERHYTLLKEVIERDLNIEVFGYLPKDVELELPERHLGLLPVYETENLDKKLEKLYGYIENCIDVEKLMNLTVKPPDFIEKEDRVLKEKKVKIAYAYDEAFNFYYKESLETLEEMGAHLIPFSPLDDERLPEGTEGLYIGGGFPEVFAKRLSENESMLREIKEAVEKGMPVYAECGGLMYLSKGIRDLEGNRYSMVGVYDFEVVMTKKLQRFGYVEAEITMDNVLFKKGERIKGHEFHYSRIEGFSQNASYIVNRPGKEEKWECGFVHKNCLASFVHINLYTYKEGVKRFLDRCSSFGRK</sequence>
<proteinExistence type="inferred from homology"/>